<dbReference type="EC" id="6.1.1.6" evidence="1"/>
<dbReference type="EMBL" id="CP000716">
    <property type="protein sequence ID" value="ABR31225.1"/>
    <property type="molecule type" value="Genomic_DNA"/>
</dbReference>
<dbReference type="RefSeq" id="WP_012057584.1">
    <property type="nucleotide sequence ID" value="NC_009616.1"/>
</dbReference>
<dbReference type="SMR" id="A6LMS4"/>
<dbReference type="STRING" id="391009.Tmel_1378"/>
<dbReference type="KEGG" id="tme:Tmel_1378"/>
<dbReference type="eggNOG" id="COG1190">
    <property type="taxonomic scope" value="Bacteria"/>
</dbReference>
<dbReference type="HOGENOM" id="CLU_008255_6_0_0"/>
<dbReference type="OrthoDB" id="9802326at2"/>
<dbReference type="Proteomes" id="UP000001110">
    <property type="component" value="Chromosome"/>
</dbReference>
<dbReference type="GO" id="GO:0005829">
    <property type="term" value="C:cytosol"/>
    <property type="evidence" value="ECO:0007669"/>
    <property type="project" value="TreeGrafter"/>
</dbReference>
<dbReference type="GO" id="GO:0005524">
    <property type="term" value="F:ATP binding"/>
    <property type="evidence" value="ECO:0007669"/>
    <property type="project" value="UniProtKB-UniRule"/>
</dbReference>
<dbReference type="GO" id="GO:0004824">
    <property type="term" value="F:lysine-tRNA ligase activity"/>
    <property type="evidence" value="ECO:0007669"/>
    <property type="project" value="UniProtKB-UniRule"/>
</dbReference>
<dbReference type="GO" id="GO:0000287">
    <property type="term" value="F:magnesium ion binding"/>
    <property type="evidence" value="ECO:0007669"/>
    <property type="project" value="UniProtKB-UniRule"/>
</dbReference>
<dbReference type="GO" id="GO:0000049">
    <property type="term" value="F:tRNA binding"/>
    <property type="evidence" value="ECO:0007669"/>
    <property type="project" value="TreeGrafter"/>
</dbReference>
<dbReference type="GO" id="GO:0006430">
    <property type="term" value="P:lysyl-tRNA aminoacylation"/>
    <property type="evidence" value="ECO:0007669"/>
    <property type="project" value="UniProtKB-UniRule"/>
</dbReference>
<dbReference type="CDD" id="cd00775">
    <property type="entry name" value="LysRS_core"/>
    <property type="match status" value="1"/>
</dbReference>
<dbReference type="CDD" id="cd04322">
    <property type="entry name" value="LysRS_N"/>
    <property type="match status" value="1"/>
</dbReference>
<dbReference type="FunFam" id="2.40.50.140:FF:000024">
    <property type="entry name" value="Lysine--tRNA ligase"/>
    <property type="match status" value="1"/>
</dbReference>
<dbReference type="Gene3D" id="3.30.930.10">
    <property type="entry name" value="Bira Bifunctional Protein, Domain 2"/>
    <property type="match status" value="1"/>
</dbReference>
<dbReference type="Gene3D" id="2.40.50.140">
    <property type="entry name" value="Nucleic acid-binding proteins"/>
    <property type="match status" value="1"/>
</dbReference>
<dbReference type="HAMAP" id="MF_00252">
    <property type="entry name" value="Lys_tRNA_synth_class2"/>
    <property type="match status" value="1"/>
</dbReference>
<dbReference type="InterPro" id="IPR004364">
    <property type="entry name" value="Aa-tRNA-synt_II"/>
</dbReference>
<dbReference type="InterPro" id="IPR006195">
    <property type="entry name" value="aa-tRNA-synth_II"/>
</dbReference>
<dbReference type="InterPro" id="IPR045864">
    <property type="entry name" value="aa-tRNA-synth_II/BPL/LPL"/>
</dbReference>
<dbReference type="InterPro" id="IPR002313">
    <property type="entry name" value="Lys-tRNA-ligase_II"/>
</dbReference>
<dbReference type="InterPro" id="IPR034762">
    <property type="entry name" value="Lys-tRNA-ligase_II_bac/euk"/>
</dbReference>
<dbReference type="InterPro" id="IPR044136">
    <property type="entry name" value="Lys-tRNA-ligase_II_N"/>
</dbReference>
<dbReference type="InterPro" id="IPR018149">
    <property type="entry name" value="Lys-tRNA-synth_II_C"/>
</dbReference>
<dbReference type="InterPro" id="IPR012340">
    <property type="entry name" value="NA-bd_OB-fold"/>
</dbReference>
<dbReference type="InterPro" id="IPR004365">
    <property type="entry name" value="NA-bd_OB_tRNA"/>
</dbReference>
<dbReference type="NCBIfam" id="TIGR00499">
    <property type="entry name" value="lysS_bact"/>
    <property type="match status" value="1"/>
</dbReference>
<dbReference type="NCBIfam" id="NF001756">
    <property type="entry name" value="PRK00484.1"/>
    <property type="match status" value="1"/>
</dbReference>
<dbReference type="PANTHER" id="PTHR42918:SF15">
    <property type="entry name" value="LYSINE--TRNA LIGASE, CHLOROPLASTIC_MITOCHONDRIAL"/>
    <property type="match status" value="1"/>
</dbReference>
<dbReference type="PANTHER" id="PTHR42918">
    <property type="entry name" value="LYSYL-TRNA SYNTHETASE"/>
    <property type="match status" value="1"/>
</dbReference>
<dbReference type="Pfam" id="PF00152">
    <property type="entry name" value="tRNA-synt_2"/>
    <property type="match status" value="1"/>
</dbReference>
<dbReference type="Pfam" id="PF01336">
    <property type="entry name" value="tRNA_anti-codon"/>
    <property type="match status" value="1"/>
</dbReference>
<dbReference type="PIRSF" id="PIRSF039101">
    <property type="entry name" value="LysRS2"/>
    <property type="match status" value="1"/>
</dbReference>
<dbReference type="PRINTS" id="PR00982">
    <property type="entry name" value="TRNASYNTHLYS"/>
</dbReference>
<dbReference type="SUPFAM" id="SSF55681">
    <property type="entry name" value="Class II aaRS and biotin synthetases"/>
    <property type="match status" value="1"/>
</dbReference>
<dbReference type="SUPFAM" id="SSF50249">
    <property type="entry name" value="Nucleic acid-binding proteins"/>
    <property type="match status" value="1"/>
</dbReference>
<dbReference type="PROSITE" id="PS50862">
    <property type="entry name" value="AA_TRNA_LIGASE_II"/>
    <property type="match status" value="1"/>
</dbReference>
<gene>
    <name evidence="1" type="primary">lysS</name>
    <name type="ordered locus">Tmel_1378</name>
</gene>
<evidence type="ECO:0000255" key="1">
    <source>
        <dbReference type="HAMAP-Rule" id="MF_00252"/>
    </source>
</evidence>
<proteinExistence type="inferred from homology"/>
<name>SYK_THEM4</name>
<feature type="chain" id="PRO_1000012957" description="Lysine--tRNA ligase">
    <location>
        <begin position="1"/>
        <end position="502"/>
    </location>
</feature>
<feature type="binding site" evidence="1">
    <location>
        <position position="398"/>
    </location>
    <ligand>
        <name>Mg(2+)</name>
        <dbReference type="ChEBI" id="CHEBI:18420"/>
        <label>1</label>
    </ligand>
</feature>
<feature type="binding site" evidence="1">
    <location>
        <position position="405"/>
    </location>
    <ligand>
        <name>Mg(2+)</name>
        <dbReference type="ChEBI" id="CHEBI:18420"/>
        <label>1</label>
    </ligand>
</feature>
<feature type="binding site" evidence="1">
    <location>
        <position position="405"/>
    </location>
    <ligand>
        <name>Mg(2+)</name>
        <dbReference type="ChEBI" id="CHEBI:18420"/>
        <label>2</label>
    </ligand>
</feature>
<comment type="catalytic activity">
    <reaction evidence="1">
        <text>tRNA(Lys) + L-lysine + ATP = L-lysyl-tRNA(Lys) + AMP + diphosphate</text>
        <dbReference type="Rhea" id="RHEA:20792"/>
        <dbReference type="Rhea" id="RHEA-COMP:9696"/>
        <dbReference type="Rhea" id="RHEA-COMP:9697"/>
        <dbReference type="ChEBI" id="CHEBI:30616"/>
        <dbReference type="ChEBI" id="CHEBI:32551"/>
        <dbReference type="ChEBI" id="CHEBI:33019"/>
        <dbReference type="ChEBI" id="CHEBI:78442"/>
        <dbReference type="ChEBI" id="CHEBI:78529"/>
        <dbReference type="ChEBI" id="CHEBI:456215"/>
        <dbReference type="EC" id="6.1.1.6"/>
    </reaction>
</comment>
<comment type="cofactor">
    <cofactor evidence="1">
        <name>Mg(2+)</name>
        <dbReference type="ChEBI" id="CHEBI:18420"/>
    </cofactor>
    <text evidence="1">Binds 3 Mg(2+) ions per subunit.</text>
</comment>
<comment type="subunit">
    <text evidence="1">Homodimer.</text>
</comment>
<comment type="subcellular location">
    <subcellularLocation>
        <location evidence="1">Cytoplasm</location>
    </subcellularLocation>
</comment>
<comment type="similarity">
    <text evidence="1">Belongs to the class-II aminoacyl-tRNA synthetase family.</text>
</comment>
<accession>A6LMS4</accession>
<protein>
    <recommendedName>
        <fullName evidence="1">Lysine--tRNA ligase</fullName>
        <ecNumber evidence="1">6.1.1.6</ecNumber>
    </recommendedName>
    <alternativeName>
        <fullName evidence="1">Lysyl-tRNA synthetase</fullName>
        <shortName evidence="1">LysRS</shortName>
    </alternativeName>
</protein>
<keyword id="KW-0030">Aminoacyl-tRNA synthetase</keyword>
<keyword id="KW-0067">ATP-binding</keyword>
<keyword id="KW-0963">Cytoplasm</keyword>
<keyword id="KW-0436">Ligase</keyword>
<keyword id="KW-0460">Magnesium</keyword>
<keyword id="KW-0479">Metal-binding</keyword>
<keyword id="KW-0547">Nucleotide-binding</keyword>
<keyword id="KW-0648">Protein biosynthesis</keyword>
<reference key="1">
    <citation type="submission" date="2007-05" db="EMBL/GenBank/DDBJ databases">
        <title>Complete sequence of Thermosipho melanesiensis BI429.</title>
        <authorList>
            <consortium name="US DOE Joint Genome Institute"/>
            <person name="Copeland A."/>
            <person name="Lucas S."/>
            <person name="Lapidus A."/>
            <person name="Barry K."/>
            <person name="Glavina del Rio T."/>
            <person name="Dalin E."/>
            <person name="Tice H."/>
            <person name="Pitluck S."/>
            <person name="Chertkov O."/>
            <person name="Brettin T."/>
            <person name="Bruce D."/>
            <person name="Detter J.C."/>
            <person name="Han C."/>
            <person name="Schmutz J."/>
            <person name="Larimer F."/>
            <person name="Land M."/>
            <person name="Hauser L."/>
            <person name="Kyrpides N."/>
            <person name="Mikhailova N."/>
            <person name="Nelson K."/>
            <person name="Gogarten J.P."/>
            <person name="Noll K."/>
            <person name="Richardson P."/>
        </authorList>
    </citation>
    <scope>NUCLEOTIDE SEQUENCE [LARGE SCALE GENOMIC DNA]</scope>
    <source>
        <strain>DSM 12029 / CIP 104789 / BI429</strain>
    </source>
</reference>
<organism>
    <name type="scientific">Thermosipho melanesiensis (strain DSM 12029 / CIP 104789 / BI429)</name>
    <dbReference type="NCBI Taxonomy" id="391009"/>
    <lineage>
        <taxon>Bacteria</taxon>
        <taxon>Thermotogati</taxon>
        <taxon>Thermotogota</taxon>
        <taxon>Thermotogae</taxon>
        <taxon>Thermotogales</taxon>
        <taxon>Fervidobacteriaceae</taxon>
        <taxon>Thermosipho</taxon>
    </lineage>
</organism>
<sequence length="502" mass="58999">MLREFREQRIKEIEQLKRKNINPYPNRFDKTHTSEMIKKEFEGLNPGEVKDDVFVSTAGRIMSLRKHGKSAFFHIKDFYGRIQAYIRKDVVGEEAYEFFKEHIAIGDIVGVKGNVFKSKTGEITILIKEIKLLNKPLRPMPEKWHGIKDKEVLYRQRYVDMIANDDTLNRFKVRFEVIKLIRDFLNSKGFIEVETPILEYVTGGASARPFVTHLNVFDIEMYMRIATELYLKRFIVGGFEKVYELGKNFRNEGLSYKHHPEFTSIEIYQAYADYEDMMNLTEELFVYIVEKLFGTTKIKYQNVELDFSRPWRRIKMRDFIKEHLGVDILEDSMGRMMDVLEEHGVEVEIRDKGHMIEKLWDLVEDKVVQPTFLLEHPVEISPLAKKHREDPRVTERFELIIYGREMANAFSELNDPVDQYERFLKQVELREAGDEEAQMMDRDFVRALEYGMPPTGGLGIGIDRLVMLLTNSATIRDVIAFPLVRLKSFEEEELDIEGGSQE</sequence>